<sequence>MTRKQKRLAVIAGGMGFIATAVLLVLFAFSQSVAYFYMPGDLAKSPIGAGTLIRLGGLVGEGSIVRGEGTQVQFSVTDGSDAIKVRYNGILPDLFREGQGVVTEGKFEPGSDVFVADSVLAKHDERYMPKQVADRLKADGVWKGEEASQ</sequence>
<protein>
    <recommendedName>
        <fullName evidence="1">Cytochrome c-type biogenesis protein CcmE</fullName>
    </recommendedName>
    <alternativeName>
        <fullName evidence="1">Cytochrome c maturation protein E</fullName>
    </alternativeName>
    <alternativeName>
        <fullName evidence="1">Heme chaperone CcmE</fullName>
    </alternativeName>
</protein>
<reference key="1">
    <citation type="journal article" date="2009" name="J. Bacteriol.">
        <title>Genome sequences of three Agrobacterium biovars help elucidate the evolution of multichromosome genomes in bacteria.</title>
        <authorList>
            <person name="Slater S.C."/>
            <person name="Goldman B.S."/>
            <person name="Goodner B."/>
            <person name="Setubal J.C."/>
            <person name="Farrand S.K."/>
            <person name="Nester E.W."/>
            <person name="Burr T.J."/>
            <person name="Banta L."/>
            <person name="Dickerman A.W."/>
            <person name="Paulsen I."/>
            <person name="Otten L."/>
            <person name="Suen G."/>
            <person name="Welch R."/>
            <person name="Almeida N.F."/>
            <person name="Arnold F."/>
            <person name="Burton O.T."/>
            <person name="Du Z."/>
            <person name="Ewing A."/>
            <person name="Godsy E."/>
            <person name="Heisel S."/>
            <person name="Houmiel K.L."/>
            <person name="Jhaveri J."/>
            <person name="Lu J."/>
            <person name="Miller N.M."/>
            <person name="Norton S."/>
            <person name="Chen Q."/>
            <person name="Phoolcharoen W."/>
            <person name="Ohlin V."/>
            <person name="Ondrusek D."/>
            <person name="Pride N."/>
            <person name="Stricklin S.L."/>
            <person name="Sun J."/>
            <person name="Wheeler C."/>
            <person name="Wilson L."/>
            <person name="Zhu H."/>
            <person name="Wood D.W."/>
        </authorList>
    </citation>
    <scope>NUCLEOTIDE SEQUENCE [LARGE SCALE GENOMIC DNA]</scope>
    <source>
        <strain>K84 / ATCC BAA-868</strain>
    </source>
</reference>
<name>CCME_RHIR8</name>
<gene>
    <name evidence="1" type="primary">ccmE</name>
    <name evidence="1" type="synonym">cycJ</name>
    <name type="ordered locus">Arad_1494</name>
</gene>
<comment type="function">
    <text evidence="1">Heme chaperone required for the biogenesis of c-type cytochromes. Transiently binds heme delivered by CcmC and transfers the heme to apo-cytochromes in a process facilitated by CcmF and CcmH.</text>
</comment>
<comment type="subcellular location">
    <subcellularLocation>
        <location evidence="1">Cell inner membrane</location>
        <topology evidence="1">Single-pass type II membrane protein</topology>
        <orientation evidence="1">Periplasmic side</orientation>
    </subcellularLocation>
</comment>
<comment type="similarity">
    <text evidence="1">Belongs to the CcmE/CycJ family.</text>
</comment>
<feature type="chain" id="PRO_1000188999" description="Cytochrome c-type biogenesis protein CcmE">
    <location>
        <begin position="1"/>
        <end position="149"/>
    </location>
</feature>
<feature type="topological domain" description="Cytoplasmic" evidence="1">
    <location>
        <begin position="1"/>
        <end position="7"/>
    </location>
</feature>
<feature type="transmembrane region" description="Helical; Signal-anchor for type II membrane protein" evidence="1">
    <location>
        <begin position="8"/>
        <end position="28"/>
    </location>
</feature>
<feature type="topological domain" description="Periplasmic" evidence="1">
    <location>
        <begin position="29"/>
        <end position="149"/>
    </location>
</feature>
<feature type="binding site" description="covalent" evidence="1">
    <location>
        <position position="123"/>
    </location>
    <ligand>
        <name>heme</name>
        <dbReference type="ChEBI" id="CHEBI:30413"/>
    </ligand>
</feature>
<feature type="binding site" description="axial binding residue" evidence="1">
    <location>
        <position position="127"/>
    </location>
    <ligand>
        <name>heme</name>
        <dbReference type="ChEBI" id="CHEBI:30413"/>
    </ligand>
    <ligandPart>
        <name>Fe</name>
        <dbReference type="ChEBI" id="CHEBI:18248"/>
    </ligandPart>
</feature>
<accession>B9JBL3</accession>
<keyword id="KW-0997">Cell inner membrane</keyword>
<keyword id="KW-1003">Cell membrane</keyword>
<keyword id="KW-0201">Cytochrome c-type biogenesis</keyword>
<keyword id="KW-0349">Heme</keyword>
<keyword id="KW-0408">Iron</keyword>
<keyword id="KW-0472">Membrane</keyword>
<keyword id="KW-0479">Metal-binding</keyword>
<keyword id="KW-0735">Signal-anchor</keyword>
<keyword id="KW-0812">Transmembrane</keyword>
<keyword id="KW-1133">Transmembrane helix</keyword>
<dbReference type="EMBL" id="CP000628">
    <property type="protein sequence ID" value="ACM25919.1"/>
    <property type="molecule type" value="Genomic_DNA"/>
</dbReference>
<dbReference type="RefSeq" id="WP_007693264.1">
    <property type="nucleotide sequence ID" value="NC_011985.1"/>
</dbReference>
<dbReference type="SMR" id="B9JBL3"/>
<dbReference type="STRING" id="311403.Arad_1494"/>
<dbReference type="GeneID" id="86847738"/>
<dbReference type="KEGG" id="ara:Arad_1494"/>
<dbReference type="eggNOG" id="COG2332">
    <property type="taxonomic scope" value="Bacteria"/>
</dbReference>
<dbReference type="HOGENOM" id="CLU_079503_1_1_5"/>
<dbReference type="Proteomes" id="UP000001600">
    <property type="component" value="Chromosome 1"/>
</dbReference>
<dbReference type="GO" id="GO:0005886">
    <property type="term" value="C:plasma membrane"/>
    <property type="evidence" value="ECO:0007669"/>
    <property type="project" value="UniProtKB-SubCell"/>
</dbReference>
<dbReference type="GO" id="GO:0020037">
    <property type="term" value="F:heme binding"/>
    <property type="evidence" value="ECO:0007669"/>
    <property type="project" value="InterPro"/>
</dbReference>
<dbReference type="GO" id="GO:0046872">
    <property type="term" value="F:metal ion binding"/>
    <property type="evidence" value="ECO:0007669"/>
    <property type="project" value="UniProtKB-KW"/>
</dbReference>
<dbReference type="GO" id="GO:0017004">
    <property type="term" value="P:cytochrome complex assembly"/>
    <property type="evidence" value="ECO:0007669"/>
    <property type="project" value="UniProtKB-KW"/>
</dbReference>
<dbReference type="Gene3D" id="2.40.50.140">
    <property type="entry name" value="Nucleic acid-binding proteins"/>
    <property type="match status" value="1"/>
</dbReference>
<dbReference type="HAMAP" id="MF_01959">
    <property type="entry name" value="CcmE"/>
    <property type="match status" value="1"/>
</dbReference>
<dbReference type="InterPro" id="IPR004329">
    <property type="entry name" value="CcmE"/>
</dbReference>
<dbReference type="InterPro" id="IPR036127">
    <property type="entry name" value="CcmE-like_sf"/>
</dbReference>
<dbReference type="InterPro" id="IPR012340">
    <property type="entry name" value="NA-bd_OB-fold"/>
</dbReference>
<dbReference type="NCBIfam" id="NF009727">
    <property type="entry name" value="PRK13254.1-1"/>
    <property type="match status" value="1"/>
</dbReference>
<dbReference type="NCBIfam" id="NF009731">
    <property type="entry name" value="PRK13254.1-5"/>
    <property type="match status" value="1"/>
</dbReference>
<dbReference type="PANTHER" id="PTHR34128">
    <property type="entry name" value="CYTOCHROME C-TYPE BIOGENESIS PROTEIN CCME HOMOLOG, MITOCHONDRIAL"/>
    <property type="match status" value="1"/>
</dbReference>
<dbReference type="PANTHER" id="PTHR34128:SF2">
    <property type="entry name" value="CYTOCHROME C-TYPE BIOGENESIS PROTEIN CCME HOMOLOG, MITOCHONDRIAL"/>
    <property type="match status" value="1"/>
</dbReference>
<dbReference type="Pfam" id="PF03100">
    <property type="entry name" value="CcmE"/>
    <property type="match status" value="1"/>
</dbReference>
<dbReference type="SUPFAM" id="SSF82093">
    <property type="entry name" value="Heme chaperone CcmE"/>
    <property type="match status" value="1"/>
</dbReference>
<organism>
    <name type="scientific">Rhizobium rhizogenes (strain K84 / ATCC BAA-868)</name>
    <name type="common">Agrobacterium radiobacter</name>
    <dbReference type="NCBI Taxonomy" id="311403"/>
    <lineage>
        <taxon>Bacteria</taxon>
        <taxon>Pseudomonadati</taxon>
        <taxon>Pseudomonadota</taxon>
        <taxon>Alphaproteobacteria</taxon>
        <taxon>Hyphomicrobiales</taxon>
        <taxon>Rhizobiaceae</taxon>
        <taxon>Rhizobium/Agrobacterium group</taxon>
        <taxon>Rhizobium</taxon>
    </lineage>
</organism>
<evidence type="ECO:0000255" key="1">
    <source>
        <dbReference type="HAMAP-Rule" id="MF_01959"/>
    </source>
</evidence>
<proteinExistence type="inferred from homology"/>